<protein>
    <recommendedName>
        <fullName evidence="4">Beta-carotene 15,15'-dioxygenase</fullName>
        <ecNumber evidence="1 2">1.13.11.63</ecNumber>
    </recommendedName>
</protein>
<gene>
    <name type="primary">blh</name>
</gene>
<feature type="chain" id="PRO_0000408499" description="Beta-carotene 15,15'-dioxygenase">
    <location>
        <begin position="1"/>
        <end position="275"/>
    </location>
</feature>
<feature type="transmembrane region" description="Helical" evidence="1">
    <location>
        <begin position="1"/>
        <end position="21"/>
    </location>
</feature>
<feature type="transmembrane region" description="Helical" evidence="1">
    <location>
        <begin position="36"/>
        <end position="56"/>
    </location>
</feature>
<feature type="transmembrane region" description="Helical" evidence="1">
    <location>
        <begin position="57"/>
        <end position="77"/>
    </location>
</feature>
<feature type="transmembrane region" description="Helical" evidence="1">
    <location>
        <begin position="91"/>
        <end position="111"/>
    </location>
</feature>
<feature type="transmembrane region" description="Helical" evidence="1">
    <location>
        <begin position="127"/>
        <end position="147"/>
    </location>
</feature>
<feature type="transmembrane region" description="Helical" evidence="1">
    <location>
        <begin position="160"/>
        <end position="180"/>
    </location>
</feature>
<feature type="transmembrane region" description="Helical" evidence="1">
    <location>
        <begin position="210"/>
        <end position="230"/>
    </location>
</feature>
<feature type="transmembrane region" description="Helical" evidence="1">
    <location>
        <begin position="244"/>
        <end position="264"/>
    </location>
</feature>
<feature type="binding site" evidence="1 5">
    <location>
        <position position="21"/>
    </location>
    <ligand>
        <name>Fe cation</name>
        <dbReference type="ChEBI" id="CHEBI:24875"/>
    </ligand>
</feature>
<feature type="binding site" evidence="1 5">
    <location>
        <position position="78"/>
    </location>
    <ligand>
        <name>Fe cation</name>
        <dbReference type="ChEBI" id="CHEBI:24875"/>
    </ligand>
</feature>
<feature type="binding site" evidence="1 5">
    <location>
        <position position="188"/>
    </location>
    <ligand>
        <name>Fe cation</name>
        <dbReference type="ChEBI" id="CHEBI:24875"/>
    </ligand>
</feature>
<feature type="binding site" evidence="1 5">
    <location>
        <position position="192"/>
    </location>
    <ligand>
        <name>Fe cation</name>
        <dbReference type="ChEBI" id="CHEBI:24875"/>
    </ligand>
</feature>
<feature type="mutagenesis site" description="3% of wild-type activity." evidence="2">
    <original>H</original>
    <variation>A</variation>
    <location>
        <position position="21"/>
    </location>
</feature>
<feature type="mutagenesis site" description="Loss of activity." evidence="2">
    <original>H</original>
    <variation>A</variation>
    <location>
        <position position="78"/>
    </location>
</feature>
<feature type="mutagenesis site" description="Loss of activity." evidence="2">
    <original>H</original>
    <variation>A</variation>
    <location>
        <position position="188"/>
    </location>
</feature>
<feature type="mutagenesis site" description="5% of wild-type activity." evidence="2">
    <original>H</original>
    <variation>A</variation>
    <location>
        <position position="192"/>
    </location>
</feature>
<organism>
    <name type="scientific">Uncultured marine bacterium 66A03</name>
    <dbReference type="NCBI Taxonomy" id="331677"/>
    <lineage>
        <taxon>Bacteria</taxon>
        <taxon>environmental samples</taxon>
    </lineage>
</organism>
<keyword id="KW-1003">Cell membrane</keyword>
<keyword id="KW-0223">Dioxygenase</keyword>
<keyword id="KW-0408">Iron</keyword>
<keyword id="KW-0472">Membrane</keyword>
<keyword id="KW-0479">Metal-binding</keyword>
<keyword id="KW-0560">Oxidoreductase</keyword>
<keyword id="KW-0812">Transmembrane</keyword>
<keyword id="KW-1133">Transmembrane helix</keyword>
<sequence length="275" mass="31037">MGLMLIDWCALALVVFIGLPHGALDAAISFSMISSAKRIARLAGILLIYLLLATAFFLIWYQLPAFSLLIFLLISIIHFGMADFNASPSKLKWPHIIAHGGVVTVWLPLIQKNEVTKLFSILTNGPTPILWDILLIFFLCWSIGVCLHTYETLRSKHYNIAFELIGLIFLAWYAPPLVTFATYFCFIHSRRHFSFVWKQLQHMSSKKMMIGSAIILSCTSWLIGGGIYFFLNSKMIASEAALQTVFIGLAALTVPHMILIDFIFRPHSSRIKIKN</sequence>
<name>BLH_UNCMB</name>
<accession>Q4PNI0</accession>
<reference key="1">
    <citation type="journal article" date="2005" name="PLoS Biol.">
        <title>New insights into metabolic properties of marine bacteria encoding proteorhodopsins.</title>
        <authorList>
            <person name="Sabehi G."/>
            <person name="Loy A."/>
            <person name="Jung K.H."/>
            <person name="Partha R."/>
            <person name="Spudich J.L."/>
            <person name="Isaacson T."/>
            <person name="Hirschberg J."/>
            <person name="Wagner M."/>
            <person name="Beja O."/>
        </authorList>
    </citation>
    <scope>NUCLEOTIDE SEQUENCE [GENOMIC DNA]</scope>
</reference>
<reference key="2">
    <citation type="journal article" date="2009" name="J. Biol. Chem.">
        <title>In vitro characterization of a recombinant Blh protein from an uncultured marine bacterium as a beta-carotene 15,15'-dioxygenase.</title>
        <authorList>
            <person name="Kim Y.S."/>
            <person name="Kim N.H."/>
            <person name="Yeom S.J."/>
            <person name="Kim S.W."/>
            <person name="Oh D.K."/>
        </authorList>
    </citation>
    <scope>FUNCTION</scope>
    <scope>CATALYTIC ACTIVITY</scope>
    <scope>SUBSTRATE SPECIFICITY</scope>
    <scope>COFACTOR</scope>
    <scope>BIOPHYSICOCHEMICAL PROPERTIES</scope>
    <scope>SUBUNIT</scope>
    <scope>METAL-BINDING SITES</scope>
    <scope>REACTION MECHANISM</scope>
    <scope>MUTAGENESIS OF HIS-21; HIS-78; HIS-188 AND HIS-192</scope>
</reference>
<reference key="3">
    <citation type="journal article" date="2010" name="Biotechnol. Lett.">
        <title>Retinal production from beta-carotene by beta-carotene 15,15'-dioxygenase from an unculturable marine bacterium.</title>
        <authorList>
            <person name="Kim Y.S."/>
            <person name="Park C.S."/>
            <person name="Oh D.K."/>
        </authorList>
    </citation>
    <scope>BIOTECHNOLOGY</scope>
</reference>
<dbReference type="EC" id="1.13.11.63" evidence="1 2"/>
<dbReference type="EMBL" id="DQ065755">
    <property type="protein sequence ID" value="AAY68319.1"/>
    <property type="molecule type" value="Genomic_DNA"/>
</dbReference>
<dbReference type="KEGG" id="ag:AAY68319"/>
<dbReference type="BioCyc" id="MetaCyc:MONOMER-17377"/>
<dbReference type="BRENDA" id="1.13.11.63">
    <property type="organism ID" value="3186"/>
</dbReference>
<dbReference type="GO" id="GO:0005886">
    <property type="term" value="C:plasma membrane"/>
    <property type="evidence" value="ECO:0007669"/>
    <property type="project" value="UniProtKB-SubCell"/>
</dbReference>
<dbReference type="GO" id="GO:0003834">
    <property type="term" value="F:beta-carotene 15,15'-dioxygenase activity"/>
    <property type="evidence" value="ECO:0007669"/>
    <property type="project" value="UniProtKB-EC"/>
</dbReference>
<dbReference type="GO" id="GO:0010436">
    <property type="term" value="F:carotenoid dioxygenase activity"/>
    <property type="evidence" value="ECO:0000314"/>
    <property type="project" value="UniProtKB"/>
</dbReference>
<dbReference type="GO" id="GO:0005506">
    <property type="term" value="F:iron ion binding"/>
    <property type="evidence" value="ECO:0007669"/>
    <property type="project" value="UniProtKB-UniRule"/>
</dbReference>
<dbReference type="GO" id="GO:0016121">
    <property type="term" value="P:carotene catabolic process"/>
    <property type="evidence" value="ECO:0000314"/>
    <property type="project" value="UniProtKB"/>
</dbReference>
<dbReference type="GO" id="GO:0042574">
    <property type="term" value="P:retinal metabolic process"/>
    <property type="evidence" value="ECO:0000314"/>
    <property type="project" value="UniProtKB"/>
</dbReference>
<dbReference type="HAMAP" id="MF_02093">
    <property type="entry name" value="Beta_carotene_diox"/>
    <property type="match status" value="1"/>
</dbReference>
<dbReference type="InterPro" id="IPR022270">
    <property type="entry name" value="Blh_diox"/>
</dbReference>
<dbReference type="NCBIfam" id="TIGR03753">
    <property type="entry name" value="blh_monoox"/>
    <property type="match status" value="1"/>
</dbReference>
<dbReference type="Pfam" id="PF15461">
    <property type="entry name" value="BCD"/>
    <property type="match status" value="1"/>
</dbReference>
<comment type="function">
    <text evidence="2">Catalyzes the cleavage of beta-carotene at its central double bond (15,15') to yield two molecules of all-trans-retinal. Exhibits the highest activity for beta-carotene, followed by beta-cryptoxanthin, beta-apo-4'-carotenal, alpha-carotene, and gamma-carotene in decreasing order, but has no activity on beta-apo-8'-carotenal, beta-apo-12'-carotenal, lutein, zeaxanthin, or lycopene, suggesting that the presence of one unsubstituted beta-ionone ring in a substrate with a molecular weight greater than C35 seems to be essential for enzyme activity.</text>
</comment>
<comment type="catalytic activity">
    <reaction evidence="1 2">
        <text>all-trans-beta-carotene + O2 = 2 all-trans-retinal</text>
        <dbReference type="Rhea" id="RHEA:32887"/>
        <dbReference type="ChEBI" id="CHEBI:15379"/>
        <dbReference type="ChEBI" id="CHEBI:17579"/>
        <dbReference type="ChEBI" id="CHEBI:17898"/>
        <dbReference type="EC" id="1.13.11.63"/>
    </reaction>
</comment>
<comment type="cofactor">
    <cofactor evidence="1 2">
        <name>Fe(2+)</name>
        <dbReference type="ChEBI" id="CHEBI:29033"/>
    </cofactor>
    <text evidence="2">Binds 1 Fe(2+) ion per subunit.</text>
</comment>
<comment type="biophysicochemical properties">
    <kinetics>
        <KM evidence="2">37 uM for beta-carotene</KM>
        <KM evidence="2">29 uM for beta-cryptoxanthin</KM>
        <KM evidence="2">147 uM for beta-apo-4'-carotenal</KM>
        <KM evidence="2">169 uM for alpha-carotene</KM>
        <KM evidence="2">382 uM for gamma-carotene</KM>
        <text>The kcat is 4.5-fold higher with beta-carotene than with beta-cryptoxanthin as substrate.</text>
    </kinetics>
    <phDependence>
        <text evidence="2">Optimum pH is 8.0.</text>
    </phDependence>
    <temperatureDependence>
        <text evidence="2">Optimum temperature is 40 degrees Celsius. Above this temperature, the enzyme activity decreases significantly, exhibiting 66% of the maximum activity at 50 degrees Celsius. Below 40 degrees Celsius, the enzyme activity decreases with decreasing temperature, exhibiting 15% of the maximum activity at 25 degrees Celsius. The half-lives of the enzyme at 35, 40, 45, 50, and 55 degrees Celsius are 17.6, 15.0, 12.5, 6.1, and 1.5 hours, respectively.</text>
    </temperatureDependence>
</comment>
<comment type="subunit">
    <text evidence="2">Homodimer.</text>
</comment>
<comment type="subcellular location">
    <subcellularLocation>
        <location evidence="1 4">Cell membrane</location>
        <topology evidence="1 4">Multi-pass membrane protein</topology>
    </subcellularLocation>
</comment>
<comment type="biotechnology">
    <text evidence="3">Could be used for high retinal production.</text>
</comment>
<comment type="similarity">
    <text evidence="1 4">Belongs to the Brp/Blh beta-carotene diooxygenase family.</text>
</comment>
<proteinExistence type="evidence at protein level"/>
<evidence type="ECO:0000255" key="1">
    <source>
        <dbReference type="HAMAP-Rule" id="MF_02093"/>
    </source>
</evidence>
<evidence type="ECO:0000269" key="2">
    <source>
    </source>
</evidence>
<evidence type="ECO:0000269" key="3">
    <source>
    </source>
</evidence>
<evidence type="ECO:0000305" key="4"/>
<evidence type="ECO:0000305" key="5">
    <source>
    </source>
</evidence>